<reference evidence="5 6" key="1">
    <citation type="journal article" date="2006" name="Biochem. J.">
        <title>A novel subfamily of monomeric inorganic pyrophosphatases in photosynthetic eukaryotes.</title>
        <authorList>
            <person name="Gomez-Garcia M.R."/>
            <person name="Losada M."/>
            <person name="Serrano A."/>
        </authorList>
    </citation>
    <scope>NUCLEOTIDE SEQUENCE [MRNA]</scope>
    <scope>CATALYTIC ACTIVITY</scope>
    <scope>BIOPHYSICOCHEMICAL PROPERTIES</scope>
    <scope>SUBUNIT</scope>
    <scope>SUBCELLULAR LOCATION</scope>
    <scope>MASS SPECTROMETRY</scope>
    <source>
        <strain>21gr / CC-1690</strain>
    </source>
</reference>
<feature type="transit peptide" description="Chloroplast" evidence="5">
    <location>
        <begin position="1"/>
        <end status="unknown"/>
    </location>
</feature>
<feature type="chain" id="PRO_0000253938" description="Soluble inorganic pyrophosphatase 1, chloroplastic">
    <location>
        <begin status="unknown"/>
        <end position="280"/>
    </location>
</feature>
<feature type="binding site" evidence="1">
    <location>
        <position position="120"/>
    </location>
    <ligand>
        <name>diphosphate</name>
        <dbReference type="ChEBI" id="CHEBI:33019"/>
    </ligand>
</feature>
<feature type="binding site" evidence="2">
    <location>
        <position position="152"/>
    </location>
    <ligand>
        <name>Mg(2+)</name>
        <dbReference type="ChEBI" id="CHEBI:18420"/>
        <label>1</label>
    </ligand>
</feature>
<feature type="binding site" evidence="2">
    <location>
        <position position="157"/>
    </location>
    <ligand>
        <name>Mg(2+)</name>
        <dbReference type="ChEBI" id="CHEBI:18420"/>
        <label>1</label>
    </ligand>
</feature>
<feature type="binding site" evidence="2">
    <location>
        <position position="157"/>
    </location>
    <ligand>
        <name>Mg(2+)</name>
        <dbReference type="ChEBI" id="CHEBI:18420"/>
        <label>2</label>
    </ligand>
</feature>
<feature type="binding site" evidence="2">
    <location>
        <position position="189"/>
    </location>
    <ligand>
        <name>Mg(2+)</name>
        <dbReference type="ChEBI" id="CHEBI:18420"/>
        <label>1</label>
    </ligand>
</feature>
<dbReference type="EC" id="3.6.1.1"/>
<dbReference type="EMBL" id="AJ298231">
    <property type="protein sequence ID" value="CAC42762.1"/>
    <property type="molecule type" value="mRNA"/>
</dbReference>
<dbReference type="RefSeq" id="XP_001702577.1">
    <property type="nucleotide sequence ID" value="XM_001702525.1"/>
</dbReference>
<dbReference type="SMR" id="Q93Y52"/>
<dbReference type="PaxDb" id="3055-EDP06356"/>
<dbReference type="ProMEX" id="Q93Y52"/>
<dbReference type="EnsemblPlants" id="PNW77146">
    <property type="protein sequence ID" value="PNW77146"/>
    <property type="gene ID" value="CHLRE_10g424100v5"/>
</dbReference>
<dbReference type="Gramene" id="PNW77146">
    <property type="protein sequence ID" value="PNW77146"/>
    <property type="gene ID" value="CHLRE_10g424100v5"/>
</dbReference>
<dbReference type="KEGG" id="cre:CHLRE_10g424100v5"/>
<dbReference type="eggNOG" id="KOG1626">
    <property type="taxonomic scope" value="Eukaryota"/>
</dbReference>
<dbReference type="HOGENOM" id="CLU_040684_0_0_1"/>
<dbReference type="OMA" id="CASQYNA"/>
<dbReference type="OrthoDB" id="1608002at2759"/>
<dbReference type="BRENDA" id="3.6.1.1">
    <property type="organism ID" value="1318"/>
</dbReference>
<dbReference type="SABIO-RK" id="Q93Y52"/>
<dbReference type="GO" id="GO:0009507">
    <property type="term" value="C:chloroplast"/>
    <property type="evidence" value="ECO:0000314"/>
    <property type="project" value="UniProtKB"/>
</dbReference>
<dbReference type="GO" id="GO:0004427">
    <property type="term" value="F:inorganic diphosphate phosphatase activity"/>
    <property type="evidence" value="ECO:0000314"/>
    <property type="project" value="UniProtKB"/>
</dbReference>
<dbReference type="GO" id="GO:0000287">
    <property type="term" value="F:magnesium ion binding"/>
    <property type="evidence" value="ECO:0007669"/>
    <property type="project" value="InterPro"/>
</dbReference>
<dbReference type="GO" id="GO:0006796">
    <property type="term" value="P:phosphate-containing compound metabolic process"/>
    <property type="evidence" value="ECO:0007669"/>
    <property type="project" value="InterPro"/>
</dbReference>
<dbReference type="CDD" id="cd00412">
    <property type="entry name" value="pyrophosphatase"/>
    <property type="match status" value="1"/>
</dbReference>
<dbReference type="FunFam" id="3.90.80.10:FF:000007">
    <property type="entry name" value="Inorganic pyrophosphatase, mitochondrial"/>
    <property type="match status" value="1"/>
</dbReference>
<dbReference type="Gene3D" id="3.90.80.10">
    <property type="entry name" value="Inorganic pyrophosphatase"/>
    <property type="match status" value="1"/>
</dbReference>
<dbReference type="InterPro" id="IPR008162">
    <property type="entry name" value="Pyrophosphatase"/>
</dbReference>
<dbReference type="InterPro" id="IPR036649">
    <property type="entry name" value="Pyrophosphatase_sf"/>
</dbReference>
<dbReference type="PANTHER" id="PTHR10286">
    <property type="entry name" value="INORGANIC PYROPHOSPHATASE"/>
    <property type="match status" value="1"/>
</dbReference>
<dbReference type="Pfam" id="PF00719">
    <property type="entry name" value="Pyrophosphatase"/>
    <property type="match status" value="1"/>
</dbReference>
<dbReference type="SUPFAM" id="SSF50324">
    <property type="entry name" value="Inorganic pyrophosphatase"/>
    <property type="match status" value="1"/>
</dbReference>
<dbReference type="PROSITE" id="PS00387">
    <property type="entry name" value="PPASE"/>
    <property type="match status" value="1"/>
</dbReference>
<comment type="catalytic activity">
    <reaction evidence="4">
        <text>diphosphate + H2O = 2 phosphate + H(+)</text>
        <dbReference type="Rhea" id="RHEA:24576"/>
        <dbReference type="ChEBI" id="CHEBI:15377"/>
        <dbReference type="ChEBI" id="CHEBI:15378"/>
        <dbReference type="ChEBI" id="CHEBI:33019"/>
        <dbReference type="ChEBI" id="CHEBI:43474"/>
        <dbReference type="EC" id="3.6.1.1"/>
    </reaction>
</comment>
<comment type="cofactor">
    <cofactor evidence="2">
        <name>Mg(2+)</name>
        <dbReference type="ChEBI" id="CHEBI:18420"/>
    </cofactor>
</comment>
<comment type="biophysicochemical properties">
    <kinetics>
        <KM evidence="4">10.5 uM for Mg2-PPi</KM>
    </kinetics>
    <phDependence>
        <text evidence="4">Optimum pH is 7.5.</text>
    </phDependence>
</comment>
<comment type="subunit">
    <text evidence="4">Monomer.</text>
</comment>
<comment type="subcellular location">
    <subcellularLocation>
        <location evidence="4">Plastid</location>
        <location evidence="4">Chloroplast</location>
    </subcellularLocation>
</comment>
<comment type="PTM">
    <text evidence="4">The N-terminus is blocked.</text>
</comment>
<comment type="mass spectrometry"/>
<comment type="similarity">
    <text evidence="3">Belongs to the PPase family.</text>
</comment>
<keyword id="KW-0150">Chloroplast</keyword>
<keyword id="KW-0378">Hydrolase</keyword>
<keyword id="KW-0460">Magnesium</keyword>
<keyword id="KW-0479">Metal-binding</keyword>
<keyword id="KW-0934">Plastid</keyword>
<keyword id="KW-0809">Transit peptide</keyword>
<gene>
    <name type="primary">ppa1</name>
    <name type="synonym">ppaI</name>
</gene>
<sequence>MALAIRSSLRAAAMGRKAFRQAVPVRVAPAQRVRSVTTASAEITAYSVEEKGPKDSLEYRMFFKQGAKEVSCWHEIPLYAGDGHLHYICEIPKETSAKMEVATDEPRTPIKQDVKKGKLRFYPYNINWNYGMLPQTWEDPGHTDATLGAAGDNDPVDVVEIGAAAAKRGGVYKVKPVGVLAMIDDGELDWKVIAISADDPKAALCNDVEDVEKHFPGEIQKVLEWFRDYKIPDGKPANKFGYDNKCMNKEFTLNVIKETHEAYVKLKSGARANSEELSLI</sequence>
<organism>
    <name type="scientific">Chlamydomonas reinhardtii</name>
    <name type="common">Chlamydomonas smithii</name>
    <dbReference type="NCBI Taxonomy" id="3055"/>
    <lineage>
        <taxon>Eukaryota</taxon>
        <taxon>Viridiplantae</taxon>
        <taxon>Chlorophyta</taxon>
        <taxon>core chlorophytes</taxon>
        <taxon>Chlorophyceae</taxon>
        <taxon>CS clade</taxon>
        <taxon>Chlamydomonadales</taxon>
        <taxon>Chlamydomonadaceae</taxon>
        <taxon>Chlamydomonas</taxon>
    </lineage>
</organism>
<accession>Q93Y52</accession>
<evidence type="ECO:0000250" key="1"/>
<evidence type="ECO:0000250" key="2">
    <source>
        <dbReference type="UniProtKB" id="P00817"/>
    </source>
</evidence>
<evidence type="ECO:0000255" key="3"/>
<evidence type="ECO:0000269" key="4">
    <source>
    </source>
</evidence>
<evidence type="ECO:0000305" key="5"/>
<evidence type="ECO:0000312" key="6">
    <source>
        <dbReference type="EMBL" id="CAC42762.1"/>
    </source>
</evidence>
<name>IPYR1_CHLRE</name>
<protein>
    <recommendedName>
        <fullName>Soluble inorganic pyrophosphatase 1, chloroplastic</fullName>
        <ecNumber>3.6.1.1</ecNumber>
    </recommendedName>
    <alternativeName>
        <fullName>Pyrophosphate phospho-hydrolase 1</fullName>
        <shortName>PPase 1</shortName>
    </alternativeName>
</protein>
<proteinExistence type="evidence at protein level"/>